<gene>
    <name evidence="1" type="primary">plsX</name>
    <name type="ordered locus">BMA10229_A2801</name>
</gene>
<proteinExistence type="inferred from homology"/>
<dbReference type="EC" id="2.3.1.274" evidence="1"/>
<dbReference type="EMBL" id="CP000546">
    <property type="protein sequence ID" value="ABN03503.1"/>
    <property type="molecule type" value="Genomic_DNA"/>
</dbReference>
<dbReference type="RefSeq" id="WP_004192749.1">
    <property type="nucleotide sequence ID" value="NC_008836.1"/>
</dbReference>
<dbReference type="SMR" id="A2S9Y1"/>
<dbReference type="GeneID" id="93061023"/>
<dbReference type="KEGG" id="bml:BMA10229_A2801"/>
<dbReference type="HOGENOM" id="CLU_039379_1_0_4"/>
<dbReference type="UniPathway" id="UPA00085"/>
<dbReference type="Proteomes" id="UP000002283">
    <property type="component" value="Chromosome I"/>
</dbReference>
<dbReference type="GO" id="GO:0005737">
    <property type="term" value="C:cytoplasm"/>
    <property type="evidence" value="ECO:0007669"/>
    <property type="project" value="UniProtKB-SubCell"/>
</dbReference>
<dbReference type="GO" id="GO:0043811">
    <property type="term" value="F:phosphate:acyl-[acyl carrier protein] acyltransferase activity"/>
    <property type="evidence" value="ECO:0007669"/>
    <property type="project" value="UniProtKB-UniRule"/>
</dbReference>
<dbReference type="GO" id="GO:0006633">
    <property type="term" value="P:fatty acid biosynthetic process"/>
    <property type="evidence" value="ECO:0007669"/>
    <property type="project" value="UniProtKB-UniRule"/>
</dbReference>
<dbReference type="GO" id="GO:0008654">
    <property type="term" value="P:phospholipid biosynthetic process"/>
    <property type="evidence" value="ECO:0007669"/>
    <property type="project" value="UniProtKB-KW"/>
</dbReference>
<dbReference type="Gene3D" id="3.40.718.10">
    <property type="entry name" value="Isopropylmalate Dehydrogenase"/>
    <property type="match status" value="1"/>
</dbReference>
<dbReference type="HAMAP" id="MF_00019">
    <property type="entry name" value="PlsX"/>
    <property type="match status" value="1"/>
</dbReference>
<dbReference type="InterPro" id="IPR003664">
    <property type="entry name" value="FA_synthesis"/>
</dbReference>
<dbReference type="InterPro" id="IPR012281">
    <property type="entry name" value="Phospholipid_synth_PlsX-like"/>
</dbReference>
<dbReference type="NCBIfam" id="TIGR00182">
    <property type="entry name" value="plsX"/>
    <property type="match status" value="1"/>
</dbReference>
<dbReference type="PANTHER" id="PTHR30100">
    <property type="entry name" value="FATTY ACID/PHOSPHOLIPID SYNTHESIS PROTEIN PLSX"/>
    <property type="match status" value="1"/>
</dbReference>
<dbReference type="PANTHER" id="PTHR30100:SF1">
    <property type="entry name" value="PHOSPHATE ACYLTRANSFERASE"/>
    <property type="match status" value="1"/>
</dbReference>
<dbReference type="Pfam" id="PF02504">
    <property type="entry name" value="FA_synthesis"/>
    <property type="match status" value="1"/>
</dbReference>
<dbReference type="PIRSF" id="PIRSF002465">
    <property type="entry name" value="Phsphlp_syn_PlsX"/>
    <property type="match status" value="1"/>
</dbReference>
<dbReference type="SUPFAM" id="SSF53659">
    <property type="entry name" value="Isocitrate/Isopropylmalate dehydrogenase-like"/>
    <property type="match status" value="1"/>
</dbReference>
<reference key="1">
    <citation type="journal article" date="2010" name="Genome Biol. Evol.">
        <title>Continuing evolution of Burkholderia mallei through genome reduction and large-scale rearrangements.</title>
        <authorList>
            <person name="Losada L."/>
            <person name="Ronning C.M."/>
            <person name="DeShazer D."/>
            <person name="Woods D."/>
            <person name="Fedorova N."/>
            <person name="Kim H.S."/>
            <person name="Shabalina S.A."/>
            <person name="Pearson T.R."/>
            <person name="Brinkac L."/>
            <person name="Tan P."/>
            <person name="Nandi T."/>
            <person name="Crabtree J."/>
            <person name="Badger J."/>
            <person name="Beckstrom-Sternberg S."/>
            <person name="Saqib M."/>
            <person name="Schutzer S.E."/>
            <person name="Keim P."/>
            <person name="Nierman W.C."/>
        </authorList>
    </citation>
    <scope>NUCLEOTIDE SEQUENCE [LARGE SCALE GENOMIC DNA]</scope>
    <source>
        <strain>NCTC 10229</strain>
    </source>
</reference>
<keyword id="KW-0963">Cytoplasm</keyword>
<keyword id="KW-0444">Lipid biosynthesis</keyword>
<keyword id="KW-0443">Lipid metabolism</keyword>
<keyword id="KW-0594">Phospholipid biosynthesis</keyword>
<keyword id="KW-1208">Phospholipid metabolism</keyword>
<keyword id="KW-0808">Transferase</keyword>
<sequence length="368" mass="38940">MTVKLTIDCMGGDHGPSVTVPAAVKFVRSHPDAHLMLVGIESAIRAQLKKCKALGEPALSVVPATEVVAMDDPVEVALRKKKDSSMRVALNHVKEGAAQACISAGNTGALMAVSRYVLKTLPGIERPAIAFALPNPTGYTMMLDLGANVDCEPQHLLQFAEMGHALVAALEGKERPTIGLLNIGEEVIKGNETIKRAGELLRASTLNFRGNVEGNDIYKGTVDVIVCDGFVGNVALKTSEGLAQMLADIIKEEFSRSLLSKLMAILALPVLLRFKKRVDHRQYNGAALLGLRSLVIKSHGSADAYAFEWAIKRGYDAVKNGVLERLSRAMAENAAPLGESGRDANGAGQASPSAGQPAEPSAALSSKT</sequence>
<protein>
    <recommendedName>
        <fullName evidence="1">Phosphate acyltransferase</fullName>
        <ecNumber evidence="1">2.3.1.274</ecNumber>
    </recommendedName>
    <alternativeName>
        <fullName evidence="1">Acyl-ACP phosphotransacylase</fullName>
    </alternativeName>
    <alternativeName>
        <fullName evidence="1">Acyl-[acyl-carrier-protein]--phosphate acyltransferase</fullName>
    </alternativeName>
    <alternativeName>
        <fullName evidence="1">Phosphate-acyl-ACP acyltransferase</fullName>
    </alternativeName>
</protein>
<feature type="chain" id="PRO_1000001730" description="Phosphate acyltransferase">
    <location>
        <begin position="1"/>
        <end position="368"/>
    </location>
</feature>
<feature type="region of interest" description="Disordered" evidence="2">
    <location>
        <begin position="334"/>
        <end position="368"/>
    </location>
</feature>
<name>PLSX_BURM9</name>
<comment type="function">
    <text evidence="1">Catalyzes the reversible formation of acyl-phosphate (acyl-PO(4)) from acyl-[acyl-carrier-protein] (acyl-ACP). This enzyme utilizes acyl-ACP as fatty acyl donor, but not acyl-CoA.</text>
</comment>
<comment type="catalytic activity">
    <reaction evidence="1">
        <text>a fatty acyl-[ACP] + phosphate = an acyl phosphate + holo-[ACP]</text>
        <dbReference type="Rhea" id="RHEA:42292"/>
        <dbReference type="Rhea" id="RHEA-COMP:9685"/>
        <dbReference type="Rhea" id="RHEA-COMP:14125"/>
        <dbReference type="ChEBI" id="CHEBI:43474"/>
        <dbReference type="ChEBI" id="CHEBI:59918"/>
        <dbReference type="ChEBI" id="CHEBI:64479"/>
        <dbReference type="ChEBI" id="CHEBI:138651"/>
        <dbReference type="EC" id="2.3.1.274"/>
    </reaction>
</comment>
<comment type="pathway">
    <text evidence="1">Lipid metabolism; phospholipid metabolism.</text>
</comment>
<comment type="subunit">
    <text evidence="1">Homodimer. Probably interacts with PlsY.</text>
</comment>
<comment type="subcellular location">
    <subcellularLocation>
        <location evidence="1">Cytoplasm</location>
    </subcellularLocation>
    <text evidence="1">Associated with the membrane possibly through PlsY.</text>
</comment>
<comment type="similarity">
    <text evidence="1">Belongs to the PlsX family.</text>
</comment>
<evidence type="ECO:0000255" key="1">
    <source>
        <dbReference type="HAMAP-Rule" id="MF_00019"/>
    </source>
</evidence>
<evidence type="ECO:0000256" key="2">
    <source>
        <dbReference type="SAM" id="MobiDB-lite"/>
    </source>
</evidence>
<accession>A2S9Y1</accession>
<organism>
    <name type="scientific">Burkholderia mallei (strain NCTC 10229)</name>
    <dbReference type="NCBI Taxonomy" id="412022"/>
    <lineage>
        <taxon>Bacteria</taxon>
        <taxon>Pseudomonadati</taxon>
        <taxon>Pseudomonadota</taxon>
        <taxon>Betaproteobacteria</taxon>
        <taxon>Burkholderiales</taxon>
        <taxon>Burkholderiaceae</taxon>
        <taxon>Burkholderia</taxon>
        <taxon>pseudomallei group</taxon>
    </lineage>
</organism>